<feature type="chain" id="PRO_1000051314" description="Small ribosomal subunit protein uS9">
    <location>
        <begin position="1"/>
        <end position="153"/>
    </location>
</feature>
<feature type="region of interest" description="Disordered" evidence="2">
    <location>
        <begin position="1"/>
        <end position="23"/>
    </location>
</feature>
<feature type="region of interest" description="Disordered" evidence="2">
    <location>
        <begin position="121"/>
        <end position="153"/>
    </location>
</feature>
<feature type="compositionally biased region" description="Low complexity" evidence="2">
    <location>
        <begin position="1"/>
        <end position="19"/>
    </location>
</feature>
<feature type="compositionally biased region" description="Basic and acidic residues" evidence="2">
    <location>
        <begin position="129"/>
        <end position="138"/>
    </location>
</feature>
<feature type="compositionally biased region" description="Basic residues" evidence="2">
    <location>
        <begin position="139"/>
        <end position="153"/>
    </location>
</feature>
<comment type="similarity">
    <text evidence="1">Belongs to the universal ribosomal protein uS9 family.</text>
</comment>
<dbReference type="EMBL" id="AM420293">
    <property type="protein sequence ID" value="CAM05945.1"/>
    <property type="molecule type" value="Genomic_DNA"/>
</dbReference>
<dbReference type="RefSeq" id="WP_011875155.1">
    <property type="nucleotide sequence ID" value="NC_009142.1"/>
</dbReference>
<dbReference type="SMR" id="A4FPH0"/>
<dbReference type="STRING" id="405948.SACE_6780"/>
<dbReference type="KEGG" id="sen:SACE_6780"/>
<dbReference type="eggNOG" id="COG0103">
    <property type="taxonomic scope" value="Bacteria"/>
</dbReference>
<dbReference type="HOGENOM" id="CLU_046483_2_0_11"/>
<dbReference type="OrthoDB" id="9803965at2"/>
<dbReference type="Proteomes" id="UP000006728">
    <property type="component" value="Chromosome"/>
</dbReference>
<dbReference type="GO" id="GO:0005737">
    <property type="term" value="C:cytoplasm"/>
    <property type="evidence" value="ECO:0007669"/>
    <property type="project" value="UniProtKB-ARBA"/>
</dbReference>
<dbReference type="GO" id="GO:0015935">
    <property type="term" value="C:small ribosomal subunit"/>
    <property type="evidence" value="ECO:0007669"/>
    <property type="project" value="TreeGrafter"/>
</dbReference>
<dbReference type="GO" id="GO:0003723">
    <property type="term" value="F:RNA binding"/>
    <property type="evidence" value="ECO:0007669"/>
    <property type="project" value="TreeGrafter"/>
</dbReference>
<dbReference type="GO" id="GO:0003735">
    <property type="term" value="F:structural constituent of ribosome"/>
    <property type="evidence" value="ECO:0007669"/>
    <property type="project" value="InterPro"/>
</dbReference>
<dbReference type="GO" id="GO:0006412">
    <property type="term" value="P:translation"/>
    <property type="evidence" value="ECO:0007669"/>
    <property type="project" value="UniProtKB-UniRule"/>
</dbReference>
<dbReference type="FunFam" id="3.30.230.10:FF:000001">
    <property type="entry name" value="30S ribosomal protein S9"/>
    <property type="match status" value="1"/>
</dbReference>
<dbReference type="Gene3D" id="3.30.230.10">
    <property type="match status" value="1"/>
</dbReference>
<dbReference type="HAMAP" id="MF_00532_B">
    <property type="entry name" value="Ribosomal_uS9_B"/>
    <property type="match status" value="1"/>
</dbReference>
<dbReference type="InterPro" id="IPR020568">
    <property type="entry name" value="Ribosomal_Su5_D2-typ_SF"/>
</dbReference>
<dbReference type="InterPro" id="IPR000754">
    <property type="entry name" value="Ribosomal_uS9"/>
</dbReference>
<dbReference type="InterPro" id="IPR023035">
    <property type="entry name" value="Ribosomal_uS9_bac/plastid"/>
</dbReference>
<dbReference type="InterPro" id="IPR020574">
    <property type="entry name" value="Ribosomal_uS9_CS"/>
</dbReference>
<dbReference type="InterPro" id="IPR014721">
    <property type="entry name" value="Ribsml_uS5_D2-typ_fold_subgr"/>
</dbReference>
<dbReference type="NCBIfam" id="NF001099">
    <property type="entry name" value="PRK00132.1"/>
    <property type="match status" value="1"/>
</dbReference>
<dbReference type="PANTHER" id="PTHR21569">
    <property type="entry name" value="RIBOSOMAL PROTEIN S9"/>
    <property type="match status" value="1"/>
</dbReference>
<dbReference type="PANTHER" id="PTHR21569:SF1">
    <property type="entry name" value="SMALL RIBOSOMAL SUBUNIT PROTEIN US9M"/>
    <property type="match status" value="1"/>
</dbReference>
<dbReference type="Pfam" id="PF00380">
    <property type="entry name" value="Ribosomal_S9"/>
    <property type="match status" value="1"/>
</dbReference>
<dbReference type="SUPFAM" id="SSF54211">
    <property type="entry name" value="Ribosomal protein S5 domain 2-like"/>
    <property type="match status" value="1"/>
</dbReference>
<dbReference type="PROSITE" id="PS00360">
    <property type="entry name" value="RIBOSOMAL_S9"/>
    <property type="match status" value="1"/>
</dbReference>
<proteinExistence type="inferred from homology"/>
<gene>
    <name evidence="1" type="primary">rpsI</name>
    <name type="ordered locus">SACE_6780</name>
</gene>
<sequence>MTAPADEAPAVEDAPVAEDIAPVPAGRPVQTVGRRKEAVVRVRLVPGNGGFKLNGKSLEQYFPNKVHQQLIKEPLVTVERVESFDVAATLRGGGPSGQAGALRMAIARALVELDADDRPALKKAGMLTRDSREKERKKYGLKKARKAPQYSKR</sequence>
<accession>A4FPH0</accession>
<keyword id="KW-1185">Reference proteome</keyword>
<keyword id="KW-0687">Ribonucleoprotein</keyword>
<keyword id="KW-0689">Ribosomal protein</keyword>
<name>RS9_SACEN</name>
<reference key="1">
    <citation type="journal article" date="2007" name="Nat. Biotechnol.">
        <title>Complete genome sequence of the erythromycin-producing bacterium Saccharopolyspora erythraea NRRL23338.</title>
        <authorList>
            <person name="Oliynyk M."/>
            <person name="Samborskyy M."/>
            <person name="Lester J.B."/>
            <person name="Mironenko T."/>
            <person name="Scott N."/>
            <person name="Dickens S."/>
            <person name="Haydock S.F."/>
            <person name="Leadlay P.F."/>
        </authorList>
    </citation>
    <scope>NUCLEOTIDE SEQUENCE [LARGE SCALE GENOMIC DNA]</scope>
    <source>
        <strain>ATCC 11635 / DSM 40517 / JCM 4748 / NBRC 13426 / NCIMB 8594 / NRRL 2338</strain>
    </source>
</reference>
<protein>
    <recommendedName>
        <fullName evidence="1">Small ribosomal subunit protein uS9</fullName>
    </recommendedName>
    <alternativeName>
        <fullName evidence="3">30S ribosomal protein S9</fullName>
    </alternativeName>
</protein>
<evidence type="ECO:0000255" key="1">
    <source>
        <dbReference type="HAMAP-Rule" id="MF_00532"/>
    </source>
</evidence>
<evidence type="ECO:0000256" key="2">
    <source>
        <dbReference type="SAM" id="MobiDB-lite"/>
    </source>
</evidence>
<evidence type="ECO:0000305" key="3"/>
<organism>
    <name type="scientific">Saccharopolyspora erythraea (strain ATCC 11635 / DSM 40517 / JCM 4748 / NBRC 13426 / NCIMB 8594 / NRRL 2338)</name>
    <dbReference type="NCBI Taxonomy" id="405948"/>
    <lineage>
        <taxon>Bacteria</taxon>
        <taxon>Bacillati</taxon>
        <taxon>Actinomycetota</taxon>
        <taxon>Actinomycetes</taxon>
        <taxon>Pseudonocardiales</taxon>
        <taxon>Pseudonocardiaceae</taxon>
        <taxon>Saccharopolyspora</taxon>
    </lineage>
</organism>